<proteinExistence type="evidence at transcript level"/>
<comment type="catalytic activity">
    <reaction>
        <text>L-seryl-[protein] + ATP = O-phospho-L-seryl-[protein] + ADP + H(+)</text>
        <dbReference type="Rhea" id="RHEA:17989"/>
        <dbReference type="Rhea" id="RHEA-COMP:9863"/>
        <dbReference type="Rhea" id="RHEA-COMP:11604"/>
        <dbReference type="ChEBI" id="CHEBI:15378"/>
        <dbReference type="ChEBI" id="CHEBI:29999"/>
        <dbReference type="ChEBI" id="CHEBI:30616"/>
        <dbReference type="ChEBI" id="CHEBI:83421"/>
        <dbReference type="ChEBI" id="CHEBI:456216"/>
        <dbReference type="EC" id="2.7.11.1"/>
    </reaction>
</comment>
<comment type="catalytic activity">
    <reaction>
        <text>L-threonyl-[protein] + ATP = O-phospho-L-threonyl-[protein] + ADP + H(+)</text>
        <dbReference type="Rhea" id="RHEA:46608"/>
        <dbReference type="Rhea" id="RHEA-COMP:11060"/>
        <dbReference type="Rhea" id="RHEA-COMP:11605"/>
        <dbReference type="ChEBI" id="CHEBI:15378"/>
        <dbReference type="ChEBI" id="CHEBI:30013"/>
        <dbReference type="ChEBI" id="CHEBI:30616"/>
        <dbReference type="ChEBI" id="CHEBI:61977"/>
        <dbReference type="ChEBI" id="CHEBI:456216"/>
        <dbReference type="EC" id="2.7.11.1"/>
    </reaction>
</comment>
<comment type="alternative products">
    <event type="alternative splicing"/>
    <isoform>
        <id>Q5XF57-1</id>
        <name>1</name>
        <sequence type="displayed"/>
    </isoform>
    <isoform>
        <id>Q5XF57-2</id>
        <name>2</name>
        <sequence type="described" ref="VSP_040170"/>
    </isoform>
</comment>
<comment type="similarity">
    <text evidence="2">Belongs to the protein kinase superfamily. Ser/Thr protein kinase family.</text>
</comment>
<comment type="sequence caution" evidence="5">
    <conflict type="erroneous gene model prediction">
        <sequence resource="EMBL-CDS" id="BAB09584"/>
    </conflict>
</comment>
<keyword id="KW-0025">Alternative splicing</keyword>
<keyword id="KW-0067">ATP-binding</keyword>
<keyword id="KW-0418">Kinase</keyword>
<keyword id="KW-0547">Nucleotide-binding</keyword>
<keyword id="KW-0597">Phosphoprotein</keyword>
<keyword id="KW-1185">Reference proteome</keyword>
<keyword id="KW-0723">Serine/threonine-protein kinase</keyword>
<keyword id="KW-0808">Transferase</keyword>
<gene>
    <name type="ordered locus">At5g57670</name>
    <name type="ORF">MRI1.2</name>
</gene>
<protein>
    <recommendedName>
        <fullName>Probable receptor-like serine/threonine-protein kinase At5g57670</fullName>
        <ecNumber>2.7.11.1</ecNumber>
    </recommendedName>
</protein>
<name>Y5576_ARATH</name>
<evidence type="ECO:0000250" key="1">
    <source>
        <dbReference type="UniProtKB" id="O48814"/>
    </source>
</evidence>
<evidence type="ECO:0000255" key="2">
    <source>
        <dbReference type="PROSITE-ProRule" id="PRU00159"/>
    </source>
</evidence>
<evidence type="ECO:0000255" key="3">
    <source>
        <dbReference type="PROSITE-ProRule" id="PRU10027"/>
    </source>
</evidence>
<evidence type="ECO:0000303" key="4">
    <source ref="4"/>
</evidence>
<evidence type="ECO:0000305" key="5"/>
<accession>Q5XF57</accession>
<accession>Q0WPA6</accession>
<accession>Q9FHH7</accession>
<sequence length="579" mass="65049">MISCSEEGSNKILVAISLDRDESQNVLSWAINVLAKPSDTVVALHLLVGEEPRKLPMKKKKRTQIRHAKAHVISMLGEFAYTCCHNQVNLEAKVGFSSNIGRGLIDEVKSISAHYLVLSRPTTHEFRIWNDIKRYVSDFAPSSCSVVLVGNQRKPHKDCYSDSAISLDINSEKYSPRSVLNTLSRDSLSSSGDDASSFNGSMVSSSFASPSDKPKHKSISPYKFISSLIMNSPLRKWRGSETKNKPKPQPLIQCFTYNEISKATNDFHQGNIVGIGGYSEVYRGDLWDGRRIAVKRLAKESGDMNKEKEFLTELGIISHVSHPNTALLLGCCVEKGLYLVFRFSENGTLYSALHENENGSLDWPVRYKIAVGVARGLHYLHKRCNHRIIHRDIKSSNVLLGPDYEPQITDFGLAKWLPNKWTHHAVIPVEGTFGYLAPESLMQGTIDEKTDIYAFGILLLEIITGRRPVNPTQKHILLWAKPAMETGNTSELVDPKLQDKYDDQQMNKLVLTASHCVQQSPILRPTMTQVLELLTNGNEAEIAKSWRMPKDMTNDDDDNNEWDDYSMIFGYDVPSDSSF</sequence>
<feature type="chain" id="PRO_0000401360" description="Probable receptor-like serine/threonine-protein kinase At5g57670">
    <location>
        <begin position="1"/>
        <end position="579"/>
    </location>
</feature>
<feature type="domain" description="Protein kinase" evidence="2">
    <location>
        <begin position="267"/>
        <end position="542"/>
    </location>
</feature>
<feature type="active site" description="Proton acceptor" evidence="2 3">
    <location>
        <position position="392"/>
    </location>
</feature>
<feature type="binding site" evidence="2">
    <location>
        <begin position="273"/>
        <end position="281"/>
    </location>
    <ligand>
        <name>ATP</name>
        <dbReference type="ChEBI" id="CHEBI:30616"/>
    </ligand>
</feature>
<feature type="binding site" evidence="2">
    <location>
        <position position="295"/>
    </location>
    <ligand>
        <name>ATP</name>
        <dbReference type="ChEBI" id="CHEBI:30616"/>
    </ligand>
</feature>
<feature type="modified residue" description="Phosphothreonine" evidence="1">
    <location>
        <position position="256"/>
    </location>
</feature>
<feature type="modified residue" description="Phosphoserine" evidence="1">
    <location>
        <position position="396"/>
    </location>
</feature>
<feature type="modified residue" description="Phosphothreonine" evidence="1">
    <location>
        <position position="432"/>
    </location>
</feature>
<feature type="splice variant" id="VSP_040170" description="In isoform 2." evidence="4">
    <location>
        <begin position="1"/>
        <end position="201"/>
    </location>
</feature>
<reference key="1">
    <citation type="journal article" date="1999" name="DNA Res.">
        <title>Structural analysis of Arabidopsis thaliana chromosome 5. IX. Sequence features of the regions of 1,011,550 bp covered by seventeen P1 and TAC clones.</title>
        <authorList>
            <person name="Kaneko T."/>
            <person name="Katoh T."/>
            <person name="Sato S."/>
            <person name="Nakamura Y."/>
            <person name="Asamizu E."/>
            <person name="Kotani H."/>
            <person name="Miyajima N."/>
            <person name="Tabata S."/>
        </authorList>
    </citation>
    <scope>NUCLEOTIDE SEQUENCE [LARGE SCALE GENOMIC DNA]</scope>
    <source>
        <strain>cv. Columbia</strain>
    </source>
</reference>
<reference key="2">
    <citation type="journal article" date="2017" name="Plant J.">
        <title>Araport11: a complete reannotation of the Arabidopsis thaliana reference genome.</title>
        <authorList>
            <person name="Cheng C.Y."/>
            <person name="Krishnakumar V."/>
            <person name="Chan A.P."/>
            <person name="Thibaud-Nissen F."/>
            <person name="Schobel S."/>
            <person name="Town C.D."/>
        </authorList>
    </citation>
    <scope>GENOME REANNOTATION</scope>
    <source>
        <strain>cv. Columbia</strain>
    </source>
</reference>
<reference key="3">
    <citation type="submission" date="2004-12" db="EMBL/GenBank/DDBJ databases">
        <title>Arabidopsis ORF clones.</title>
        <authorList>
            <person name="Shinn P."/>
            <person name="Chen H."/>
            <person name="Cheuk R.F."/>
            <person name="Kim C.J."/>
            <person name="Ecker J.R."/>
        </authorList>
    </citation>
    <scope>NUCLEOTIDE SEQUENCE [LARGE SCALE MRNA] (ISOFORM 1)</scope>
    <source>
        <strain>cv. Columbia</strain>
    </source>
</reference>
<reference key="4">
    <citation type="submission" date="2006-07" db="EMBL/GenBank/DDBJ databases">
        <title>Large-scale analysis of RIKEN Arabidopsis full-length (RAFL) cDNAs.</title>
        <authorList>
            <person name="Totoki Y."/>
            <person name="Seki M."/>
            <person name="Ishida J."/>
            <person name="Nakajima M."/>
            <person name="Enju A."/>
            <person name="Kamiya A."/>
            <person name="Narusaka M."/>
            <person name="Shin-i T."/>
            <person name="Nakagawa M."/>
            <person name="Sakamoto N."/>
            <person name="Oishi K."/>
            <person name="Kohara Y."/>
            <person name="Kobayashi M."/>
            <person name="Toyoda A."/>
            <person name="Sakaki Y."/>
            <person name="Sakurai T."/>
            <person name="Iida K."/>
            <person name="Akiyama K."/>
            <person name="Satou M."/>
            <person name="Toyoda T."/>
            <person name="Konagaya A."/>
            <person name="Carninci P."/>
            <person name="Kawai J."/>
            <person name="Hayashizaki Y."/>
            <person name="Shinozaki K."/>
        </authorList>
    </citation>
    <scope>NUCLEOTIDE SEQUENCE [LARGE SCALE MRNA] (ISOFORM 2)</scope>
    <source>
        <strain>cv. Columbia</strain>
    </source>
</reference>
<organism>
    <name type="scientific">Arabidopsis thaliana</name>
    <name type="common">Mouse-ear cress</name>
    <dbReference type="NCBI Taxonomy" id="3702"/>
    <lineage>
        <taxon>Eukaryota</taxon>
        <taxon>Viridiplantae</taxon>
        <taxon>Streptophyta</taxon>
        <taxon>Embryophyta</taxon>
        <taxon>Tracheophyta</taxon>
        <taxon>Spermatophyta</taxon>
        <taxon>Magnoliopsida</taxon>
        <taxon>eudicotyledons</taxon>
        <taxon>Gunneridae</taxon>
        <taxon>Pentapetalae</taxon>
        <taxon>rosids</taxon>
        <taxon>malvids</taxon>
        <taxon>Brassicales</taxon>
        <taxon>Brassicaceae</taxon>
        <taxon>Camelineae</taxon>
        <taxon>Arabidopsis</taxon>
    </lineage>
</organism>
<dbReference type="EC" id="2.7.11.1"/>
<dbReference type="EMBL" id="AB018118">
    <property type="protein sequence ID" value="BAB09584.1"/>
    <property type="status" value="ALT_SEQ"/>
    <property type="molecule type" value="Genomic_DNA"/>
</dbReference>
<dbReference type="EMBL" id="CP002688">
    <property type="protein sequence ID" value="AED96934.1"/>
    <property type="molecule type" value="Genomic_DNA"/>
</dbReference>
<dbReference type="EMBL" id="BT015759">
    <property type="protein sequence ID" value="AAU90049.1"/>
    <property type="molecule type" value="mRNA"/>
</dbReference>
<dbReference type="EMBL" id="BT020463">
    <property type="protein sequence ID" value="AAW30041.1"/>
    <property type="molecule type" value="mRNA"/>
</dbReference>
<dbReference type="EMBL" id="AK229173">
    <property type="protein sequence ID" value="BAF01043.1"/>
    <property type="molecule type" value="mRNA"/>
</dbReference>
<dbReference type="RefSeq" id="NP_001078762.1">
    <molecule id="Q5XF57-1"/>
    <property type="nucleotide sequence ID" value="NM_001085293.2"/>
</dbReference>
<dbReference type="SMR" id="Q5XF57"/>
<dbReference type="FunCoup" id="Q5XF57">
    <property type="interactions" value="342"/>
</dbReference>
<dbReference type="PaxDb" id="3702-AT5G57670.2"/>
<dbReference type="DNASU" id="835873"/>
<dbReference type="EnsemblPlants" id="AT5G57670.2">
    <molecule id="Q5XF57-1"/>
    <property type="protein sequence ID" value="AT5G57670.2"/>
    <property type="gene ID" value="AT5G57670"/>
</dbReference>
<dbReference type="GeneID" id="835873"/>
<dbReference type="Gramene" id="AT5G57670.2">
    <molecule id="Q5XF57-1"/>
    <property type="protein sequence ID" value="AT5G57670.2"/>
    <property type="gene ID" value="AT5G57670"/>
</dbReference>
<dbReference type="KEGG" id="ath:AT5G57670"/>
<dbReference type="Araport" id="AT5G57670"/>
<dbReference type="TAIR" id="AT5G57670"/>
<dbReference type="eggNOG" id="KOG1187">
    <property type="taxonomic scope" value="Eukaryota"/>
</dbReference>
<dbReference type="HOGENOM" id="CLU_000288_155_2_1"/>
<dbReference type="InParanoid" id="Q5XF57"/>
<dbReference type="OMA" id="EVANYCY"/>
<dbReference type="PhylomeDB" id="Q5XF57"/>
<dbReference type="PRO" id="PR:Q5XF57"/>
<dbReference type="Proteomes" id="UP000006548">
    <property type="component" value="Chromosome 5"/>
</dbReference>
<dbReference type="ExpressionAtlas" id="Q5XF57">
    <property type="expression patterns" value="baseline and differential"/>
</dbReference>
<dbReference type="GO" id="GO:0005524">
    <property type="term" value="F:ATP binding"/>
    <property type="evidence" value="ECO:0007669"/>
    <property type="project" value="UniProtKB-KW"/>
</dbReference>
<dbReference type="GO" id="GO:0106310">
    <property type="term" value="F:protein serine kinase activity"/>
    <property type="evidence" value="ECO:0007669"/>
    <property type="project" value="RHEA"/>
</dbReference>
<dbReference type="GO" id="GO:0004674">
    <property type="term" value="F:protein serine/threonine kinase activity"/>
    <property type="evidence" value="ECO:0007669"/>
    <property type="project" value="UniProtKB-KW"/>
</dbReference>
<dbReference type="CDD" id="cd00293">
    <property type="entry name" value="USP-like"/>
    <property type="match status" value="1"/>
</dbReference>
<dbReference type="FunFam" id="1.10.510.10:FF:000412">
    <property type="entry name" value="Probable receptor-like serine/threonine-protein kinase At5g57670"/>
    <property type="match status" value="1"/>
</dbReference>
<dbReference type="FunFam" id="3.30.200.20:FF:000325">
    <property type="entry name" value="Putative receptor-like serine/threonine-protein kinase"/>
    <property type="match status" value="1"/>
</dbReference>
<dbReference type="Gene3D" id="3.40.50.620">
    <property type="entry name" value="HUPs"/>
    <property type="match status" value="1"/>
</dbReference>
<dbReference type="Gene3D" id="3.30.200.20">
    <property type="entry name" value="Phosphorylase Kinase, domain 1"/>
    <property type="match status" value="1"/>
</dbReference>
<dbReference type="Gene3D" id="1.10.510.10">
    <property type="entry name" value="Transferase(Phosphotransferase) domain 1"/>
    <property type="match status" value="1"/>
</dbReference>
<dbReference type="InterPro" id="IPR011009">
    <property type="entry name" value="Kinase-like_dom_sf"/>
</dbReference>
<dbReference type="InterPro" id="IPR000719">
    <property type="entry name" value="Prot_kinase_dom"/>
</dbReference>
<dbReference type="InterPro" id="IPR017441">
    <property type="entry name" value="Protein_kinase_ATP_BS"/>
</dbReference>
<dbReference type="InterPro" id="IPR046958">
    <property type="entry name" value="RBK1/2/STUNTED"/>
</dbReference>
<dbReference type="InterPro" id="IPR014729">
    <property type="entry name" value="Rossmann-like_a/b/a_fold"/>
</dbReference>
<dbReference type="InterPro" id="IPR008271">
    <property type="entry name" value="Ser/Thr_kinase_AS"/>
</dbReference>
<dbReference type="PANTHER" id="PTHR47987">
    <property type="entry name" value="OS08G0249100 PROTEIN"/>
    <property type="match status" value="1"/>
</dbReference>
<dbReference type="PANTHER" id="PTHR47987:SF3">
    <property type="entry name" value="OS08G0249100 PROTEIN"/>
    <property type="match status" value="1"/>
</dbReference>
<dbReference type="Pfam" id="PF00069">
    <property type="entry name" value="Pkinase"/>
    <property type="match status" value="1"/>
</dbReference>
<dbReference type="SMART" id="SM00220">
    <property type="entry name" value="S_TKc"/>
    <property type="match status" value="1"/>
</dbReference>
<dbReference type="SUPFAM" id="SSF52402">
    <property type="entry name" value="Adenine nucleotide alpha hydrolases-like"/>
    <property type="match status" value="1"/>
</dbReference>
<dbReference type="SUPFAM" id="SSF56112">
    <property type="entry name" value="Protein kinase-like (PK-like)"/>
    <property type="match status" value="1"/>
</dbReference>
<dbReference type="PROSITE" id="PS00107">
    <property type="entry name" value="PROTEIN_KINASE_ATP"/>
    <property type="match status" value="1"/>
</dbReference>
<dbReference type="PROSITE" id="PS50011">
    <property type="entry name" value="PROTEIN_KINASE_DOM"/>
    <property type="match status" value="1"/>
</dbReference>
<dbReference type="PROSITE" id="PS00108">
    <property type="entry name" value="PROTEIN_KINASE_ST"/>
    <property type="match status" value="1"/>
</dbReference>